<feature type="signal peptide" evidence="2">
    <location>
        <begin position="1"/>
        <end position="27"/>
    </location>
</feature>
<feature type="chain" id="PRO_0000318950" description="Receptor-type tyrosine-protein phosphatase H">
    <location>
        <begin position="28"/>
        <end position="1115"/>
    </location>
</feature>
<feature type="topological domain" description="Extracellular" evidence="2">
    <location>
        <begin position="28"/>
        <end position="754"/>
    </location>
</feature>
<feature type="transmembrane region" description="Helical" evidence="2">
    <location>
        <begin position="755"/>
        <end position="775"/>
    </location>
</feature>
<feature type="topological domain" description="Cytoplasmic" evidence="2">
    <location>
        <begin position="776"/>
        <end position="1115"/>
    </location>
</feature>
<feature type="domain" description="Fibronectin type-III 1" evidence="4">
    <location>
        <begin position="32"/>
        <end position="121"/>
    </location>
</feature>
<feature type="domain" description="Fibronectin type-III 2" evidence="4">
    <location>
        <begin position="122"/>
        <end position="209"/>
    </location>
</feature>
<feature type="domain" description="Fibronectin type-III 3" evidence="4">
    <location>
        <begin position="210"/>
        <end position="299"/>
    </location>
</feature>
<feature type="domain" description="Fibronectin type-III 4" evidence="4">
    <location>
        <begin position="300"/>
        <end position="387"/>
    </location>
</feature>
<feature type="domain" description="Fibronectin type-III 5" evidence="4">
    <location>
        <begin position="388"/>
        <end position="477"/>
    </location>
</feature>
<feature type="domain" description="Fibronectin type-III 6" evidence="4">
    <location>
        <begin position="478"/>
        <end position="563"/>
    </location>
</feature>
<feature type="domain" description="Fibronectin type-III 7" evidence="4">
    <location>
        <begin position="564"/>
        <end position="666"/>
    </location>
</feature>
<feature type="domain" description="Fibronectin type-III 8" evidence="4">
    <location>
        <begin position="665"/>
        <end position="749"/>
    </location>
</feature>
<feature type="domain" description="Tyrosine-protein phosphatase" evidence="3">
    <location>
        <begin position="820"/>
        <end position="1079"/>
    </location>
</feature>
<feature type="active site" description="Phosphocysteine intermediate" evidence="3 5">
    <location>
        <position position="1020"/>
    </location>
</feature>
<feature type="modified residue" description="Phosphotyrosine" evidence="1">
    <location>
        <position position="1094"/>
    </location>
</feature>
<feature type="modified residue" description="Phosphotyrosine" evidence="1">
    <location>
        <position position="1102"/>
    </location>
</feature>
<feature type="glycosylation site" description="N-linked (GlcNAc...) asparagine" evidence="2">
    <location>
        <position position="35"/>
    </location>
</feature>
<feature type="glycosylation site" description="N-linked (GlcNAc...) asparagine" evidence="2">
    <location>
        <position position="83"/>
    </location>
</feature>
<feature type="glycosylation site" description="N-linked (GlcNAc...) asparagine" evidence="2">
    <location>
        <position position="172"/>
    </location>
</feature>
<feature type="glycosylation site" description="N-linked (GlcNAc...) asparagine" evidence="2">
    <location>
        <position position="256"/>
    </location>
</feature>
<feature type="glycosylation site" description="N-linked (GlcNAc...) asparagine" evidence="2">
    <location>
        <position position="285"/>
    </location>
</feature>
<feature type="glycosylation site" description="N-linked (GlcNAc...) asparagine" evidence="2">
    <location>
        <position position="350"/>
    </location>
</feature>
<feature type="glycosylation site" description="N-linked (GlcNAc...) asparagine" evidence="2">
    <location>
        <position position="434"/>
    </location>
</feature>
<feature type="glycosylation site" description="N-linked (GlcNAc...) asparagine" evidence="2">
    <location>
        <position position="468"/>
    </location>
</feature>
<feature type="glycosylation site" description="N-linked (GlcNAc...) asparagine" evidence="2">
    <location>
        <position position="556"/>
    </location>
</feature>
<feature type="glycosylation site" description="N-linked (GlcNAc...) asparagine" evidence="2">
    <location>
        <position position="642"/>
    </location>
</feature>
<feature type="splice variant" id="VSP_031318" description="In isoform 2." evidence="14">
    <location>
        <begin position="84"/>
        <end position="261"/>
    </location>
</feature>
<feature type="splice variant" id="VSP_054222" description="In isoform 3." evidence="15">
    <location>
        <begin position="126"/>
        <end position="303"/>
    </location>
</feature>
<feature type="sequence variant" id="VAR_061762" description="In dbSNP:rs55870162.">
    <original>D</original>
    <variation>N</variation>
    <location>
        <position position="232"/>
    </location>
</feature>
<feature type="sequence variant" id="VAR_061763" description="In dbSNP:rs45535035.">
    <original>V</original>
    <variation>I</variation>
    <location>
        <position position="243"/>
    </location>
</feature>
<feature type="sequence variant" id="VAR_038918" description="In dbSNP:rs2288515." evidence="11">
    <original>H</original>
    <variation>Y</variation>
    <location>
        <position position="348"/>
    </location>
</feature>
<feature type="sequence variant" id="VAR_038919" description="In dbSNP:rs16986309.">
    <original>L</original>
    <variation>F</variation>
    <location>
        <position position="543"/>
    </location>
</feature>
<feature type="sequence variant" id="VAR_038920" description="In dbSNP:rs2288523.">
    <original>K</original>
    <variation>N</variation>
    <location>
        <position position="781"/>
    </location>
</feature>
<feature type="sequence variant" id="VAR_038921" description="In dbSNP:rs890870." evidence="7">
    <original>E</original>
    <variation>K</variation>
    <location>
        <position position="823"/>
    </location>
</feature>
<feature type="sequence variant" id="VAR_061764" description="In dbSNP:rs36092369.">
    <original>G</original>
    <variation>D</variation>
    <location>
        <position position="831"/>
    </location>
</feature>
<feature type="sequence variant" id="VAR_038922" description="In dbSNP:rs2288419.">
    <original>I</original>
    <variation>V</variation>
    <location>
        <position position="1076"/>
    </location>
</feature>
<feature type="mutagenesis site" description="Loss of activity. Acts as a dominant negative mutant." evidence="6">
    <original>D</original>
    <variation>A</variation>
    <location>
        <position position="986"/>
    </location>
</feature>
<feature type="mutagenesis site" description="Loss of activity. No induction of apoptosis." evidence="6 8">
    <original>C</original>
    <variation>S</variation>
    <location>
        <position position="1020"/>
    </location>
</feature>
<feature type="sequence conflict" description="In Ref. 1; BAA03645." evidence="15" ref="1">
    <original>A</original>
    <variation>T</variation>
    <location>
        <position position="294"/>
    </location>
</feature>
<feature type="sequence conflict" description="In Ref. 1; BAA03645." evidence="15" ref="1">
    <original>E</original>
    <variation>G</variation>
    <location>
        <position position="422"/>
    </location>
</feature>
<feature type="sequence conflict" description="In Ref. 4; AAI11716." evidence="15" ref="4">
    <original>G</original>
    <variation>D</variation>
    <location>
        <position position="951"/>
    </location>
</feature>
<feature type="sequence conflict" description="In Ref. 4; AAI11716." evidence="15" ref="4">
    <original>Q</original>
    <variation>K</variation>
    <location>
        <position position="1109"/>
    </location>
</feature>
<feature type="helix" evidence="17">
    <location>
        <begin position="802"/>
        <end position="804"/>
    </location>
</feature>
<feature type="helix" evidence="17">
    <location>
        <begin position="805"/>
        <end position="827"/>
    </location>
</feature>
<feature type="turn" evidence="17">
    <location>
        <begin position="828"/>
        <end position="833"/>
    </location>
</feature>
<feature type="turn" evidence="17">
    <location>
        <begin position="837"/>
        <end position="840"/>
    </location>
</feature>
<feature type="helix" evidence="17">
    <location>
        <begin position="842"/>
        <end position="847"/>
    </location>
</feature>
<feature type="turn" evidence="17">
    <location>
        <begin position="857"/>
        <end position="859"/>
    </location>
</feature>
<feature type="turn" evidence="17">
    <location>
        <begin position="870"/>
        <end position="873"/>
    </location>
</feature>
<feature type="strand" evidence="17">
    <location>
        <begin position="876"/>
        <end position="880"/>
    </location>
</feature>
<feature type="strand" evidence="17">
    <location>
        <begin position="888"/>
        <end position="892"/>
    </location>
</feature>
<feature type="helix" evidence="17">
    <location>
        <begin position="897"/>
        <end position="899"/>
    </location>
</feature>
<feature type="helix" evidence="17">
    <location>
        <begin position="900"/>
        <end position="910"/>
    </location>
</feature>
<feature type="strand" evidence="17">
    <location>
        <begin position="914"/>
        <end position="917"/>
    </location>
</feature>
<feature type="strand" evidence="17">
    <location>
        <begin position="921"/>
        <end position="923"/>
    </location>
</feature>
<feature type="strand" evidence="17">
    <location>
        <begin position="940"/>
        <end position="942"/>
    </location>
</feature>
<feature type="strand" evidence="17">
    <location>
        <begin position="945"/>
        <end position="954"/>
    </location>
</feature>
<feature type="strand" evidence="17">
    <location>
        <begin position="956"/>
        <end position="967"/>
    </location>
</feature>
<feature type="turn" evidence="17">
    <location>
        <begin position="968"/>
        <end position="971"/>
    </location>
</feature>
<feature type="strand" evidence="17">
    <location>
        <begin position="972"/>
        <end position="981"/>
    </location>
</feature>
<feature type="helix" evidence="17">
    <location>
        <begin position="993"/>
        <end position="1007"/>
    </location>
</feature>
<feature type="strand" evidence="17">
    <location>
        <begin position="1012"/>
        <end position="1014"/>
    </location>
</feature>
<feature type="strand" evidence="17">
    <location>
        <begin position="1017"/>
        <end position="1019"/>
    </location>
</feature>
<feature type="strand" evidence="17">
    <location>
        <begin position="1021"/>
        <end position="1024"/>
    </location>
</feature>
<feature type="helix" evidence="17">
    <location>
        <begin position="1025"/>
        <end position="1043"/>
    </location>
</feature>
<feature type="strand" evidence="17">
    <location>
        <begin position="1044"/>
        <end position="1046"/>
    </location>
</feature>
<feature type="helix" evidence="17">
    <location>
        <begin position="1048"/>
        <end position="1058"/>
    </location>
</feature>
<feature type="helix" evidence="17">
    <location>
        <begin position="1066"/>
        <end position="1082"/>
    </location>
</feature>
<accession>Q9HD43</accession>
<accession>C9JCH2</accession>
<accession>Q15426</accession>
<accession>Q2NKN9</accession>
<accession>Q2NKP0</accession>
<reference key="1">
    <citation type="journal article" date="1994" name="J. Biol. Chem.">
        <title>Molecular cloning of a human transmembrane-type protein tyrosine phosphatase and its expression in gastrointestinal cancers.</title>
        <authorList>
            <person name="Matozaki T."/>
            <person name="Suzuki T."/>
            <person name="Uchida T."/>
            <person name="Inazawa J."/>
            <person name="Ariyama T."/>
            <person name="Matsuda K."/>
            <person name="Horita K."/>
            <person name="Noguchi H."/>
            <person name="Mizuno H."/>
            <person name="Sakamoto C."/>
            <person name="Kasuga M."/>
        </authorList>
    </citation>
    <scope>NUCLEOTIDE SEQUENCE [MRNA] (ISOFORM 1)</scope>
    <scope>TISSUE SPECIFICITY</scope>
</reference>
<reference key="2">
    <citation type="journal article" date="2001" name="Cytogenet. Cell Genet.">
        <title>Gene for the human transmembrane-type protein tyrosine phosphatase H (PTPRH): genomic structure, fine-mapping and its exclusion as a candidate for Peutz-Jeghers syndrome.</title>
        <authorList>
            <person name="Marneros A.G."/>
            <person name="Mehenni H."/>
            <person name="Reichenberger E."/>
            <person name="Antonarakis S.E."/>
            <person name="Krieg T."/>
            <person name="Olsen B.R."/>
        </authorList>
    </citation>
    <scope>NUCLEOTIDE SEQUENCE [GENOMIC DNA] (ISOFORM 1)</scope>
    <scope>VARIANT LYS-823</scope>
</reference>
<reference key="3">
    <citation type="journal article" date="2004" name="Nature">
        <title>The DNA sequence and biology of human chromosome 19.</title>
        <authorList>
            <person name="Grimwood J."/>
            <person name="Gordon L.A."/>
            <person name="Olsen A.S."/>
            <person name="Terry A."/>
            <person name="Schmutz J."/>
            <person name="Lamerdin J.E."/>
            <person name="Hellsten U."/>
            <person name="Goodstein D."/>
            <person name="Couronne O."/>
            <person name="Tran-Gyamfi M."/>
            <person name="Aerts A."/>
            <person name="Altherr M."/>
            <person name="Ashworth L."/>
            <person name="Bajorek E."/>
            <person name="Black S."/>
            <person name="Branscomb E."/>
            <person name="Caenepeel S."/>
            <person name="Carrano A.V."/>
            <person name="Caoile C."/>
            <person name="Chan Y.M."/>
            <person name="Christensen M."/>
            <person name="Cleland C.A."/>
            <person name="Copeland A."/>
            <person name="Dalin E."/>
            <person name="Dehal P."/>
            <person name="Denys M."/>
            <person name="Detter J.C."/>
            <person name="Escobar J."/>
            <person name="Flowers D."/>
            <person name="Fotopulos D."/>
            <person name="Garcia C."/>
            <person name="Georgescu A.M."/>
            <person name="Glavina T."/>
            <person name="Gomez M."/>
            <person name="Gonzales E."/>
            <person name="Groza M."/>
            <person name="Hammon N."/>
            <person name="Hawkins T."/>
            <person name="Haydu L."/>
            <person name="Ho I."/>
            <person name="Huang W."/>
            <person name="Israni S."/>
            <person name="Jett J."/>
            <person name="Kadner K."/>
            <person name="Kimball H."/>
            <person name="Kobayashi A."/>
            <person name="Larionov V."/>
            <person name="Leem S.-H."/>
            <person name="Lopez F."/>
            <person name="Lou Y."/>
            <person name="Lowry S."/>
            <person name="Malfatti S."/>
            <person name="Martinez D."/>
            <person name="McCready P.M."/>
            <person name="Medina C."/>
            <person name="Morgan J."/>
            <person name="Nelson K."/>
            <person name="Nolan M."/>
            <person name="Ovcharenko I."/>
            <person name="Pitluck S."/>
            <person name="Pollard M."/>
            <person name="Popkie A.P."/>
            <person name="Predki P."/>
            <person name="Quan G."/>
            <person name="Ramirez L."/>
            <person name="Rash S."/>
            <person name="Retterer J."/>
            <person name="Rodriguez A."/>
            <person name="Rogers S."/>
            <person name="Salamov A."/>
            <person name="Salazar A."/>
            <person name="She X."/>
            <person name="Smith D."/>
            <person name="Slezak T."/>
            <person name="Solovyev V."/>
            <person name="Thayer N."/>
            <person name="Tice H."/>
            <person name="Tsai M."/>
            <person name="Ustaszewska A."/>
            <person name="Vo N."/>
            <person name="Wagner M."/>
            <person name="Wheeler J."/>
            <person name="Wu K."/>
            <person name="Xie G."/>
            <person name="Yang J."/>
            <person name="Dubchak I."/>
            <person name="Furey T.S."/>
            <person name="DeJong P."/>
            <person name="Dickson M."/>
            <person name="Gordon D."/>
            <person name="Eichler E.E."/>
            <person name="Pennacchio L.A."/>
            <person name="Richardson P."/>
            <person name="Stubbs L."/>
            <person name="Rokhsar D.S."/>
            <person name="Myers R.M."/>
            <person name="Rubin E.M."/>
            <person name="Lucas S.M."/>
        </authorList>
    </citation>
    <scope>NUCLEOTIDE SEQUENCE [LARGE SCALE GENOMIC DNA]</scope>
</reference>
<reference key="4">
    <citation type="journal article" date="2004" name="Genome Res.">
        <title>The status, quality, and expansion of the NIH full-length cDNA project: the Mammalian Gene Collection (MGC).</title>
        <authorList>
            <consortium name="The MGC Project Team"/>
        </authorList>
    </citation>
    <scope>NUCLEOTIDE SEQUENCE [LARGE SCALE MRNA] (ISOFORMS 1 AND 2)</scope>
    <scope>VARIANT TYR-348</scope>
</reference>
<reference key="5">
    <citation type="journal article" date="2001" name="J. Biol. Chem.">
        <title>Inhibition of cell growth and spreading by stomach cancer-associated protein-tyrosine phosphatase-1 (SAP-1) through dephosphorylation of p130cas.</title>
        <authorList>
            <person name="Noguchi T."/>
            <person name="Tsuda M."/>
            <person name="Takeda H."/>
            <person name="Takada T."/>
            <person name="Inagaki K."/>
            <person name="Yamao T."/>
            <person name="Fukunaga K."/>
            <person name="Matozaki T."/>
            <person name="Kasuga M."/>
        </authorList>
    </citation>
    <scope>FUNCTION</scope>
    <scope>MUTAGENESIS OF ASP-986 AND CYS-1020</scope>
</reference>
<reference key="6">
    <citation type="journal article" date="2002" name="J. Biol. Chem.">
        <title>Induction of apoptosis by stomach cancer-associated protein-tyrosine phosphatase-1.</title>
        <authorList>
            <person name="Takada T."/>
            <person name="Noguchi T."/>
            <person name="Inagaki K."/>
            <person name="Hosooka T."/>
            <person name="Fukunaga K."/>
            <person name="Yamao T."/>
            <person name="Ogawa W."/>
            <person name="Matozaki T."/>
            <person name="Kasuga M."/>
        </authorList>
    </citation>
    <scope>FUNCTION</scope>
    <scope>MUTAGENESIS OF CYS-1020</scope>
</reference>
<reference key="7">
    <citation type="journal article" date="2003" name="J. Biol. Chem.">
        <title>Interaction of SAP-1, a transmembrane-type protein-tyrosine phosphatase, with the tyrosine kinase Lck. Roles in regulation of T cell function.</title>
        <authorList>
            <person name="Ito T."/>
            <person name="Okazawa H."/>
            <person name="Maruyama K."/>
            <person name="Tomizawa K."/>
            <person name="Motegi S."/>
            <person name="Ohnishi H."/>
            <person name="Kuwano H."/>
            <person name="Kosugi A."/>
            <person name="Matozaki T."/>
        </authorList>
    </citation>
    <scope>FUNCTION</scope>
    <scope>DOMAIN</scope>
    <scope>TISSUE SPECIFICITY</scope>
    <scope>INTERACTION WITH LCK</scope>
</reference>
<reference key="8">
    <citation type="journal article" date="2003" name="Oncogene">
        <title>Downregulation of stomach cancer-associated protein tyrosine phosphatase-1 (SAP-1) in advanced human hepatocellular carcinoma.</title>
        <authorList>
            <person name="Nagano H."/>
            <person name="Noguchi T."/>
            <person name="Inagaki K."/>
            <person name="Yoon S."/>
            <person name="Matozaki T."/>
            <person name="Itoh H."/>
            <person name="Kasuga M."/>
            <person name="Hayashi Y."/>
        </authorList>
    </citation>
    <scope>SUBCELLULAR LOCATION</scope>
    <scope>INDUCTION</scope>
    <scope>TISSUE SPECIFICITY</scope>
</reference>
<reference key="9">
    <citation type="journal article" date="2005" name="Biochem. Biophys. Res. Commun.">
        <title>Sap-1/PTPRH activity is regulated by reversible dimerization.</title>
        <authorList>
            <person name="Waelchli S."/>
            <person name="Espanel X."/>
            <person name="Hooft van Huijsduijnen R."/>
        </authorList>
    </citation>
    <scope>FUNCTION</scope>
    <scope>SUBUNIT</scope>
    <scope>ACTIVITY REGULATION</scope>
    <scope>DOMAIN</scope>
</reference>
<name>PTPRH_HUMAN</name>
<protein>
    <recommendedName>
        <fullName>Receptor-type tyrosine-protein phosphatase H</fullName>
        <shortName>R-PTP-H</shortName>
        <ecNumber>3.1.3.48</ecNumber>
    </recommendedName>
    <alternativeName>
        <fullName>Stomach cancer-associated protein tyrosine phosphatase 1</fullName>
        <shortName>SAP-1</shortName>
    </alternativeName>
    <alternativeName>
        <fullName>Transmembrane-type protein-tyrosine phosphatase type H</fullName>
    </alternativeName>
</protein>
<comment type="function">
    <text evidence="1 6 8 9 12">Protein phosphatase that may contribute to contact inhibition of cell growth and motility by mediating the dephosphorylation of focal adhesion-associated substrates and thus negatively regulating integrin-promoted signaling processes. Induces apoptotic cell death by at least two distinct mechanisms: inhibition of cell survival signaling mediated by PI 3-kinase, Akt, and ILK and activation of a caspase-dependent proapoptotic pathway. Inhibits the basal activity of LCK and its activation in response to TCR stimulation and TCR-induced activation of MAP kinase and surface expression of CD69. Inhibits TCR-induced tyrosine phosphorylation of LAT and ZAP70. Inhibits both basal activity of DOK1 and its CD2-induced tyrosine phosphorylation. Induces dephosphorylation of BCAR1, focal adhesion kinase and SRC. Reduces migratory activity of activity of Jurkat cells. Reduces tyrosine phosphorylation of CEACAM20 and thereby contributes to suppress the intestinal immune response CEACAM20 (By similarity).</text>
</comment>
<comment type="catalytic activity">
    <reaction evidence="5">
        <text>O-phospho-L-tyrosyl-[protein] + H2O = L-tyrosyl-[protein] + phosphate</text>
        <dbReference type="Rhea" id="RHEA:10684"/>
        <dbReference type="Rhea" id="RHEA-COMP:10136"/>
        <dbReference type="Rhea" id="RHEA-COMP:20101"/>
        <dbReference type="ChEBI" id="CHEBI:15377"/>
        <dbReference type="ChEBI" id="CHEBI:43474"/>
        <dbReference type="ChEBI" id="CHEBI:46858"/>
        <dbReference type="ChEBI" id="CHEBI:61978"/>
        <dbReference type="EC" id="3.1.3.48"/>
    </reaction>
</comment>
<comment type="activity regulation">
    <text evidence="12">Regulated by reversible dimerization. Dimerization reduces its catalytic activity.</text>
</comment>
<comment type="subunit">
    <text evidence="1 9 16">Homodimer; disulfide-linked (Probable). Interacts with LCK (PubMed:12837766). Interacts (phosphorylated form) with GRB2 (via SH2 domain) (By similarity). Interacts (phosphorylated form) with FYN (via SH2 domain) (By similarity). Interacts (via extracellular domain) with CEACAM20 (via extracellular domain); the interaction dephosphorylates CEACAM20 (By similarity).</text>
</comment>
<comment type="interaction">
    <interactant intactId="EBI-1267176">
        <id>Q9HD43</id>
    </interactant>
    <interactant intactId="EBI-741925">
        <id>P49366</id>
        <label>DHPS</label>
    </interactant>
    <organismsDiffer>false</organismsDiffer>
    <experiments>3</experiments>
</comment>
<comment type="interaction">
    <interactant intactId="EBI-1267176">
        <id>Q9HD43</id>
    </interactant>
    <interactant intactId="EBI-297353">
        <id>P00533</id>
        <label>EGFR</label>
    </interactant>
    <organismsDiffer>false</organismsDiffer>
    <experiments>3</experiments>
</comment>
<comment type="interaction">
    <interactant intactId="EBI-1267176">
        <id>Q9HD43</id>
    </interactant>
    <interactant intactId="EBI-286316">
        <id>P10912</id>
        <label>GHR</label>
    </interactant>
    <organismsDiffer>false</organismsDiffer>
    <experiments>4</experiments>
</comment>
<comment type="interaction">
    <interactant intactId="EBI-1267176">
        <id>Q9HD43</id>
    </interactant>
    <interactant intactId="EBI-10171774">
        <id>P60410</id>
        <label>KRTAP10-8</label>
    </interactant>
    <organismsDiffer>false</organismsDiffer>
    <experiments>3</experiments>
</comment>
<comment type="subcellular location">
    <subcellularLocation>
        <location evidence="1">Cell projection</location>
        <location evidence="1">Microvillus membrane</location>
        <topology evidence="15">Single-pass type I membrane protein</topology>
    </subcellularLocation>
    <subcellularLocation>
        <location evidence="1">Apical cell membrane</location>
        <topology evidence="15">Single-pass type I membrane protein</topology>
    </subcellularLocation>
    <subcellularLocation>
        <location evidence="10">Cytoplasm</location>
    </subcellularLocation>
    <text evidence="1">Colocalizes with CEACAM20 at the apical brush border of intestinal cells.</text>
</comment>
<comment type="alternative products">
    <event type="alternative splicing"/>
    <isoform>
        <id>Q9HD43-1</id>
        <name>1</name>
        <sequence type="displayed"/>
    </isoform>
    <isoform>
        <id>Q9HD43-2</id>
        <name>2</name>
        <sequence type="described" ref="VSP_031318"/>
    </isoform>
    <isoform>
        <id>Q9HD43-3</id>
        <name>3</name>
        <sequence type="described" ref="VSP_054222"/>
    </isoform>
</comment>
<comment type="tissue specificity">
    <text evidence="9 10 13">Expressed at high levels in the brain, spleen and liver and at lower levels in the heart and stomach. Expressed in pancreatic and colorectal cancer cells, but not in normal pancreas or colon. Expression in hepatocellular carcinoma is related to the differentiation status of the tumor and expression is inversely related to tumor aggressiveness.</text>
</comment>
<comment type="induction">
    <text evidence="10">Induced at the early stage of hepatocellular carcinoma and is suppressed at later stages.</text>
</comment>
<comment type="domain">
    <text>The extracellular domain mediates homodimerization. One or more cysteines in the extracellular domain is essential for the formation of dimers probably by forming a disulfide bond.</text>
</comment>
<comment type="domain">
    <text>The cytoplasmic domain mediates the interaction with LCK.</text>
</comment>
<comment type="similarity">
    <text evidence="15">Belongs to the protein-tyrosine phosphatase family. Receptor class 3 subfamily.</text>
</comment>
<comment type="sequence caution" evidence="15">
    <conflict type="frameshift">
        <sequence resource="EMBL-CDS" id="BAA03645"/>
    </conflict>
</comment>
<keyword id="KW-0002">3D-structure</keyword>
<keyword id="KW-0025">Alternative splicing</keyword>
<keyword id="KW-0053">Apoptosis</keyword>
<keyword id="KW-1003">Cell membrane</keyword>
<keyword id="KW-0966">Cell projection</keyword>
<keyword id="KW-0963">Cytoplasm</keyword>
<keyword id="KW-1015">Disulfide bond</keyword>
<keyword id="KW-0325">Glycoprotein</keyword>
<keyword id="KW-0378">Hydrolase</keyword>
<keyword id="KW-0472">Membrane</keyword>
<keyword id="KW-0597">Phosphoprotein</keyword>
<keyword id="KW-0904">Protein phosphatase</keyword>
<keyword id="KW-1267">Proteomics identification</keyword>
<keyword id="KW-1185">Reference proteome</keyword>
<keyword id="KW-0677">Repeat</keyword>
<keyword id="KW-0732">Signal</keyword>
<keyword id="KW-0812">Transmembrane</keyword>
<keyword id="KW-1133">Transmembrane helix</keyword>
<sequence>MAGAGGGLGVWGNLVLLGLCSWTGARAPAPNPGRNLTVETQTTSSISLSWEVPDGLDSQNSNYWVQCTGDGGTTETRNTTATNVTVDGLGPGSLYTCSVWVEKDGVNSSVGTVTTATAPNPVRNLRVEAQTNSSIALTWEVPDGPDPQNSTYGVEYTGDGGRAGTRSTAHTNITVDGLEPGCLYAFSMWVGKNGINSSRETRNATTAHNPVRNLRVEAQTTSSISLSWEVPDGTDPQNSTYCVQCTGDGGRTETRNTTDTRVTVDGLGPGSLYTCSVWVEKDGVNSSVEIVTSATAPNPVRNLTVEAQTNSSIALTWEVPDGPDPQNSTYGVEYTGDGGRAGTRSTAHTNITVDRLEPGCLYVFSVWVGKNGINSSRETRNATTAPNPVRNLHMETQTNSSIALCWEVPDGPYPQDYTYWVEYTGDGGGTETRNTTNTSVTAERLEPGTLYTFSVWAEKNGARGSRQNVSISTVPNAVTSLSKQDWTNSTIALRWTAPQGPGQSSYSYWVSWVREGMTDPRTQSTSGTDITLKELEAGSLYHLTVWAERNEVRGYNSTLTAATAPNEVTDLQNETQTKNSVMLWWKAPGDPHSQLYVYWVQWASKGHPRRGQDPQANWVNQTSRTNETWYKVEALEPGTLYNFTVWAERNDVASSTQSLCASTYPDTVTITSCVSTSAGYGVNLIWSCPQGGYEAFELEVGGQRGSQDRSSCGEAVSVLGLGPARSYPATITTIWDGMKVVSHSVVCHTESAGVIAGAFVGILLFLILVGLLIFFLKRRNKKKQQKPELRDLVFSSPGDIPAEDFADHVRKNERDSNCGFADEYQQLSLVGHSQSQMVASASENNAKNRYRNVLPYDWSRVPLKPIHEEPGSDYINASFMPGLWSPQEFIATQGPLPQTVGDFWRLVWEQQSHTLVMLTNCMEAGRVKCEHYWPLDSQPCTHGHLRVTLVGEEVMENWTVRELLLLQVEEQKTLSVRQFHYQAWPDHGVPSSPDTLLAFWRMLRQWLDQTMEGGPPIVHCSAGVGRTGTLIALDVLLRQLQSEGLLGPFSFVRKMRESRPLMVQTEAQYVFLHQCILRFLQQSAQAPAEKEVPYEDVENLIYENVAAIQAHKLEV</sequence>
<dbReference type="EC" id="3.1.3.48"/>
<dbReference type="EMBL" id="D15049">
    <property type="protein sequence ID" value="BAA03645.2"/>
    <property type="status" value="ALT_FRAME"/>
    <property type="molecule type" value="mRNA"/>
</dbReference>
<dbReference type="EMBL" id="AF275150">
    <property type="protein sequence ID" value="AAF91411.1"/>
    <property type="molecule type" value="Genomic_DNA"/>
</dbReference>
<dbReference type="EMBL" id="AF275131">
    <property type="protein sequence ID" value="AAF91411.1"/>
    <property type="status" value="JOINED"/>
    <property type="molecule type" value="Genomic_DNA"/>
</dbReference>
<dbReference type="EMBL" id="AF275132">
    <property type="protein sequence ID" value="AAF91411.1"/>
    <property type="status" value="JOINED"/>
    <property type="molecule type" value="Genomic_DNA"/>
</dbReference>
<dbReference type="EMBL" id="AF275133">
    <property type="protein sequence ID" value="AAF91411.1"/>
    <property type="status" value="JOINED"/>
    <property type="molecule type" value="Genomic_DNA"/>
</dbReference>
<dbReference type="EMBL" id="AF275134">
    <property type="protein sequence ID" value="AAF91411.1"/>
    <property type="status" value="JOINED"/>
    <property type="molecule type" value="Genomic_DNA"/>
</dbReference>
<dbReference type="EMBL" id="AF275135">
    <property type="protein sequence ID" value="AAF91411.1"/>
    <property type="status" value="JOINED"/>
    <property type="molecule type" value="Genomic_DNA"/>
</dbReference>
<dbReference type="EMBL" id="AF275136">
    <property type="protein sequence ID" value="AAF91411.1"/>
    <property type="status" value="JOINED"/>
    <property type="molecule type" value="Genomic_DNA"/>
</dbReference>
<dbReference type="EMBL" id="AF275137">
    <property type="protein sequence ID" value="AAF91411.1"/>
    <property type="status" value="JOINED"/>
    <property type="molecule type" value="Genomic_DNA"/>
</dbReference>
<dbReference type="EMBL" id="AF275138">
    <property type="protein sequence ID" value="AAF91411.1"/>
    <property type="status" value="JOINED"/>
    <property type="molecule type" value="Genomic_DNA"/>
</dbReference>
<dbReference type="EMBL" id="AF275139">
    <property type="protein sequence ID" value="AAF91411.1"/>
    <property type="status" value="JOINED"/>
    <property type="molecule type" value="Genomic_DNA"/>
</dbReference>
<dbReference type="EMBL" id="AF275140">
    <property type="protein sequence ID" value="AAF91411.1"/>
    <property type="status" value="JOINED"/>
    <property type="molecule type" value="Genomic_DNA"/>
</dbReference>
<dbReference type="EMBL" id="AF275141">
    <property type="protein sequence ID" value="AAF91411.1"/>
    <property type="status" value="JOINED"/>
    <property type="molecule type" value="Genomic_DNA"/>
</dbReference>
<dbReference type="EMBL" id="AF275142">
    <property type="protein sequence ID" value="AAF91411.1"/>
    <property type="status" value="JOINED"/>
    <property type="molecule type" value="Genomic_DNA"/>
</dbReference>
<dbReference type="EMBL" id="AF275143">
    <property type="protein sequence ID" value="AAF91411.1"/>
    <property type="status" value="JOINED"/>
    <property type="molecule type" value="Genomic_DNA"/>
</dbReference>
<dbReference type="EMBL" id="AF275144">
    <property type="protein sequence ID" value="AAF91411.1"/>
    <property type="status" value="JOINED"/>
    <property type="molecule type" value="Genomic_DNA"/>
</dbReference>
<dbReference type="EMBL" id="AF275145">
    <property type="protein sequence ID" value="AAF91411.1"/>
    <property type="status" value="JOINED"/>
    <property type="molecule type" value="Genomic_DNA"/>
</dbReference>
<dbReference type="EMBL" id="AF275146">
    <property type="protein sequence ID" value="AAF91411.1"/>
    <property type="status" value="JOINED"/>
    <property type="molecule type" value="Genomic_DNA"/>
</dbReference>
<dbReference type="EMBL" id="AF275147">
    <property type="protein sequence ID" value="AAF91411.1"/>
    <property type="status" value="JOINED"/>
    <property type="molecule type" value="Genomic_DNA"/>
</dbReference>
<dbReference type="EMBL" id="AF275148">
    <property type="protein sequence ID" value="AAF91411.1"/>
    <property type="status" value="JOINED"/>
    <property type="molecule type" value="Genomic_DNA"/>
</dbReference>
<dbReference type="EMBL" id="AF275149">
    <property type="protein sequence ID" value="AAF91411.1"/>
    <property type="status" value="JOINED"/>
    <property type="molecule type" value="Genomic_DNA"/>
</dbReference>
<dbReference type="EMBL" id="AC010327">
    <property type="status" value="NOT_ANNOTATED_CDS"/>
    <property type="molecule type" value="Genomic_DNA"/>
</dbReference>
<dbReference type="EMBL" id="BC111715">
    <property type="protein sequence ID" value="AAI11716.1"/>
    <property type="molecule type" value="mRNA"/>
</dbReference>
<dbReference type="EMBL" id="BC111716">
    <property type="protein sequence ID" value="AAI11717.1"/>
    <property type="molecule type" value="mRNA"/>
</dbReference>
<dbReference type="CCDS" id="CCDS33110.1">
    <molecule id="Q9HD43-1"/>
</dbReference>
<dbReference type="CCDS" id="CCDS54321.1">
    <molecule id="Q9HD43-3"/>
</dbReference>
<dbReference type="PIR" id="A49724">
    <property type="entry name" value="A49724"/>
</dbReference>
<dbReference type="RefSeq" id="NP_001154912.2">
    <molecule id="Q9HD43-3"/>
    <property type="nucleotide sequence ID" value="NM_001161440.3"/>
</dbReference>
<dbReference type="RefSeq" id="NP_002833.4">
    <molecule id="Q9HD43-1"/>
    <property type="nucleotide sequence ID" value="NM_002842.5"/>
</dbReference>
<dbReference type="PDB" id="7XC0">
    <property type="method" value="X-ray"/>
    <property type="resolution" value="1.56 A"/>
    <property type="chains" value="A=797-1086"/>
</dbReference>
<dbReference type="PDBsum" id="7XC0"/>
<dbReference type="SMR" id="Q9HD43"/>
<dbReference type="FunCoup" id="Q9HD43">
    <property type="interactions" value="409"/>
</dbReference>
<dbReference type="IntAct" id="Q9HD43">
    <property type="interactions" value="26"/>
</dbReference>
<dbReference type="MINT" id="Q9HD43"/>
<dbReference type="STRING" id="9606.ENSP00000365528"/>
<dbReference type="DEPOD" id="PTPRH"/>
<dbReference type="GlyCosmos" id="Q9HD43">
    <property type="glycosylation" value="10 sites, No reported glycans"/>
</dbReference>
<dbReference type="GlyGen" id="Q9HD43">
    <property type="glycosylation" value="13 sites, 3 N-linked glycans (3 sites)"/>
</dbReference>
<dbReference type="iPTMnet" id="Q9HD43"/>
<dbReference type="PhosphoSitePlus" id="Q9HD43"/>
<dbReference type="SwissPalm" id="Q9HD43"/>
<dbReference type="BioMuta" id="PTPRH"/>
<dbReference type="DMDM" id="296452983"/>
<dbReference type="jPOST" id="Q9HD43"/>
<dbReference type="MassIVE" id="Q9HD43"/>
<dbReference type="PaxDb" id="9606-ENSP00000365528"/>
<dbReference type="PeptideAtlas" id="Q9HD43"/>
<dbReference type="ProteomicsDB" id="81830">
    <molecule id="Q9HD43-1"/>
</dbReference>
<dbReference type="ProteomicsDB" id="81831">
    <molecule id="Q9HD43-2"/>
</dbReference>
<dbReference type="ProteomicsDB" id="9594"/>
<dbReference type="Antibodypedia" id="33039">
    <property type="antibodies" value="87 antibodies from 17 providers"/>
</dbReference>
<dbReference type="DNASU" id="5794"/>
<dbReference type="Ensembl" id="ENST00000263434.5">
    <molecule id="Q9HD43-3"/>
    <property type="protein sequence ID" value="ENSP00000263434.4"/>
    <property type="gene ID" value="ENSG00000080031.10"/>
</dbReference>
<dbReference type="Ensembl" id="ENST00000376350.8">
    <molecule id="Q9HD43-1"/>
    <property type="protein sequence ID" value="ENSP00000365528.2"/>
    <property type="gene ID" value="ENSG00000080031.10"/>
</dbReference>
<dbReference type="GeneID" id="5794"/>
<dbReference type="KEGG" id="hsa:5794"/>
<dbReference type="MANE-Select" id="ENST00000376350.8">
    <property type="protein sequence ID" value="ENSP00000365528.2"/>
    <property type="RefSeq nucleotide sequence ID" value="NM_002842.5"/>
    <property type="RefSeq protein sequence ID" value="NP_002833.4"/>
</dbReference>
<dbReference type="UCSC" id="uc002qjq.4">
    <molecule id="Q9HD43-1"/>
    <property type="organism name" value="human"/>
</dbReference>
<dbReference type="AGR" id="HGNC:9672"/>
<dbReference type="CTD" id="5794"/>
<dbReference type="DisGeNET" id="5794"/>
<dbReference type="GeneCards" id="PTPRH"/>
<dbReference type="HGNC" id="HGNC:9672">
    <property type="gene designation" value="PTPRH"/>
</dbReference>
<dbReference type="HPA" id="ENSG00000080031">
    <property type="expression patterns" value="Tissue enhanced (gallbladder, intestine, stomach)"/>
</dbReference>
<dbReference type="MIM" id="602510">
    <property type="type" value="gene"/>
</dbReference>
<dbReference type="neXtProt" id="NX_Q9HD43"/>
<dbReference type="OpenTargets" id="ENSG00000080031"/>
<dbReference type="PharmGKB" id="PA34017"/>
<dbReference type="VEuPathDB" id="HostDB:ENSG00000080031"/>
<dbReference type="eggNOG" id="KOG0791">
    <property type="taxonomic scope" value="Eukaryota"/>
</dbReference>
<dbReference type="GeneTree" id="ENSGT00940000162227"/>
<dbReference type="HOGENOM" id="CLU_001541_2_0_1"/>
<dbReference type="InParanoid" id="Q9HD43"/>
<dbReference type="OMA" id="WAEKDGA"/>
<dbReference type="OrthoDB" id="6058203at2759"/>
<dbReference type="PAN-GO" id="Q9HD43">
    <property type="GO annotations" value="2 GO annotations based on evolutionary models"/>
</dbReference>
<dbReference type="PhylomeDB" id="Q9HD43"/>
<dbReference type="TreeFam" id="TF351926"/>
<dbReference type="BRENDA" id="3.1.3.48">
    <property type="organism ID" value="2681"/>
</dbReference>
<dbReference type="PathwayCommons" id="Q9HD43"/>
<dbReference type="SignaLink" id="Q9HD43"/>
<dbReference type="SIGNOR" id="Q9HD43"/>
<dbReference type="ChiTaRS" id="PTPRH">
    <property type="organism name" value="human"/>
</dbReference>
<dbReference type="Pharos" id="Q9HD43">
    <property type="development level" value="Tbio"/>
</dbReference>
<dbReference type="PRO" id="PR:Q9HD43"/>
<dbReference type="Proteomes" id="UP000005640">
    <property type="component" value="Chromosome 19"/>
</dbReference>
<dbReference type="RNAct" id="Q9HD43">
    <property type="molecule type" value="protein"/>
</dbReference>
<dbReference type="Bgee" id="ENSG00000080031">
    <property type="expression patterns" value="Expressed in jejunal mucosa and 149 other cell types or tissues"/>
</dbReference>
<dbReference type="GO" id="GO:0016324">
    <property type="term" value="C:apical plasma membrane"/>
    <property type="evidence" value="ECO:0007669"/>
    <property type="project" value="UniProtKB-SubCell"/>
</dbReference>
<dbReference type="GO" id="GO:0005829">
    <property type="term" value="C:cytosol"/>
    <property type="evidence" value="ECO:0000314"/>
    <property type="project" value="HPA"/>
</dbReference>
<dbReference type="GO" id="GO:0031528">
    <property type="term" value="C:microvillus membrane"/>
    <property type="evidence" value="ECO:0007669"/>
    <property type="project" value="UniProtKB-SubCell"/>
</dbReference>
<dbReference type="GO" id="GO:0016607">
    <property type="term" value="C:nuclear speck"/>
    <property type="evidence" value="ECO:0000314"/>
    <property type="project" value="HPA"/>
</dbReference>
<dbReference type="GO" id="GO:0005886">
    <property type="term" value="C:plasma membrane"/>
    <property type="evidence" value="ECO:0000314"/>
    <property type="project" value="HPA"/>
</dbReference>
<dbReference type="GO" id="GO:0045296">
    <property type="term" value="F:cadherin binding"/>
    <property type="evidence" value="ECO:0000353"/>
    <property type="project" value="ARUK-UCL"/>
</dbReference>
<dbReference type="GO" id="GO:0004725">
    <property type="term" value="F:protein tyrosine phosphatase activity"/>
    <property type="evidence" value="ECO:0000318"/>
    <property type="project" value="GO_Central"/>
</dbReference>
<dbReference type="GO" id="GO:0005001">
    <property type="term" value="F:transmembrane receptor protein tyrosine phosphatase activity"/>
    <property type="evidence" value="ECO:0000304"/>
    <property type="project" value="ProtInc"/>
</dbReference>
<dbReference type="GO" id="GO:0006915">
    <property type="term" value="P:apoptotic process"/>
    <property type="evidence" value="ECO:0007669"/>
    <property type="project" value="UniProtKB-KW"/>
</dbReference>
<dbReference type="GO" id="GO:0007411">
    <property type="term" value="P:axon guidance"/>
    <property type="evidence" value="ECO:0000318"/>
    <property type="project" value="GO_Central"/>
</dbReference>
<dbReference type="GO" id="GO:0006470">
    <property type="term" value="P:protein dephosphorylation"/>
    <property type="evidence" value="ECO:0000304"/>
    <property type="project" value="ProtInc"/>
</dbReference>
<dbReference type="GO" id="GO:0007165">
    <property type="term" value="P:signal transduction"/>
    <property type="evidence" value="ECO:0000318"/>
    <property type="project" value="GO_Central"/>
</dbReference>
<dbReference type="CDD" id="cd00063">
    <property type="entry name" value="FN3"/>
    <property type="match status" value="7"/>
</dbReference>
<dbReference type="CDD" id="cd14619">
    <property type="entry name" value="R-PTPc-H"/>
    <property type="match status" value="1"/>
</dbReference>
<dbReference type="FunFam" id="2.60.40.10:FF:000374">
    <property type="entry name" value="Protein tyrosine phosphatase, receptor type, H"/>
    <property type="match status" value="7"/>
</dbReference>
<dbReference type="FunFam" id="3.90.190.10:FF:000009">
    <property type="entry name" value="Receptor-type tyrosine-protein phosphatase beta"/>
    <property type="match status" value="1"/>
</dbReference>
<dbReference type="Gene3D" id="1.20.5.100">
    <property type="entry name" value="Cytochrome c1, transmembrane anchor, C-terminal"/>
    <property type="match status" value="1"/>
</dbReference>
<dbReference type="Gene3D" id="2.60.40.10">
    <property type="entry name" value="Immunoglobulins"/>
    <property type="match status" value="7"/>
</dbReference>
<dbReference type="Gene3D" id="3.90.190.10">
    <property type="entry name" value="Protein tyrosine phosphatase superfamily"/>
    <property type="match status" value="1"/>
</dbReference>
<dbReference type="InterPro" id="IPR003961">
    <property type="entry name" value="FN3_dom"/>
</dbReference>
<dbReference type="InterPro" id="IPR036116">
    <property type="entry name" value="FN3_sf"/>
</dbReference>
<dbReference type="InterPro" id="IPR013783">
    <property type="entry name" value="Ig-like_fold"/>
</dbReference>
<dbReference type="InterPro" id="IPR029021">
    <property type="entry name" value="Prot-tyrosine_phosphatase-like"/>
</dbReference>
<dbReference type="InterPro" id="IPR000242">
    <property type="entry name" value="PTP_cat"/>
</dbReference>
<dbReference type="InterPro" id="IPR050713">
    <property type="entry name" value="RTP_Phos/Ushers"/>
</dbReference>
<dbReference type="InterPro" id="IPR016130">
    <property type="entry name" value="Tyr_Pase_AS"/>
</dbReference>
<dbReference type="InterPro" id="IPR003595">
    <property type="entry name" value="Tyr_Pase_cat"/>
</dbReference>
<dbReference type="InterPro" id="IPR000387">
    <property type="entry name" value="Tyr_Pase_dom"/>
</dbReference>
<dbReference type="PANTHER" id="PTHR46957">
    <property type="entry name" value="CYTOKINE RECEPTOR"/>
    <property type="match status" value="1"/>
</dbReference>
<dbReference type="PANTHER" id="PTHR46957:SF10">
    <property type="entry name" value="PROTEIN TYROSINE PHOSPHATASE, RECEPTOR TYPE, H"/>
    <property type="match status" value="1"/>
</dbReference>
<dbReference type="Pfam" id="PF00041">
    <property type="entry name" value="fn3"/>
    <property type="match status" value="6"/>
</dbReference>
<dbReference type="Pfam" id="PF00102">
    <property type="entry name" value="Y_phosphatase"/>
    <property type="match status" value="1"/>
</dbReference>
<dbReference type="PRINTS" id="PR00700">
    <property type="entry name" value="PRTYPHPHTASE"/>
</dbReference>
<dbReference type="SMART" id="SM00060">
    <property type="entry name" value="FN3"/>
    <property type="match status" value="7"/>
</dbReference>
<dbReference type="SMART" id="SM00194">
    <property type="entry name" value="PTPc"/>
    <property type="match status" value="1"/>
</dbReference>
<dbReference type="SMART" id="SM00404">
    <property type="entry name" value="PTPc_motif"/>
    <property type="match status" value="1"/>
</dbReference>
<dbReference type="SUPFAM" id="SSF52799">
    <property type="entry name" value="(Phosphotyrosine protein) phosphatases II"/>
    <property type="match status" value="1"/>
</dbReference>
<dbReference type="SUPFAM" id="SSF49265">
    <property type="entry name" value="Fibronectin type III"/>
    <property type="match status" value="4"/>
</dbReference>
<dbReference type="PROSITE" id="PS50853">
    <property type="entry name" value="FN3"/>
    <property type="match status" value="7"/>
</dbReference>
<dbReference type="PROSITE" id="PS00383">
    <property type="entry name" value="TYR_PHOSPHATASE_1"/>
    <property type="match status" value="1"/>
</dbReference>
<dbReference type="PROSITE" id="PS50056">
    <property type="entry name" value="TYR_PHOSPHATASE_2"/>
    <property type="match status" value="1"/>
</dbReference>
<dbReference type="PROSITE" id="PS50055">
    <property type="entry name" value="TYR_PHOSPHATASE_PTP"/>
    <property type="match status" value="1"/>
</dbReference>
<gene>
    <name type="primary">PTPRH</name>
    <name type="synonym">SAP1</name>
</gene>
<evidence type="ECO:0000250" key="1">
    <source>
        <dbReference type="UniProtKB" id="E9Q0N2"/>
    </source>
</evidence>
<evidence type="ECO:0000255" key="2"/>
<evidence type="ECO:0000255" key="3">
    <source>
        <dbReference type="PROSITE-ProRule" id="PRU00160"/>
    </source>
</evidence>
<evidence type="ECO:0000255" key="4">
    <source>
        <dbReference type="PROSITE-ProRule" id="PRU00316"/>
    </source>
</evidence>
<evidence type="ECO:0000255" key="5">
    <source>
        <dbReference type="PROSITE-ProRule" id="PRU10044"/>
    </source>
</evidence>
<evidence type="ECO:0000269" key="6">
    <source>
    </source>
</evidence>
<evidence type="ECO:0000269" key="7">
    <source>
    </source>
</evidence>
<evidence type="ECO:0000269" key="8">
    <source>
    </source>
</evidence>
<evidence type="ECO:0000269" key="9">
    <source>
    </source>
</evidence>
<evidence type="ECO:0000269" key="10">
    <source>
    </source>
</evidence>
<evidence type="ECO:0000269" key="11">
    <source>
    </source>
</evidence>
<evidence type="ECO:0000269" key="12">
    <source>
    </source>
</evidence>
<evidence type="ECO:0000269" key="13">
    <source>
    </source>
</evidence>
<evidence type="ECO:0000303" key="14">
    <source>
    </source>
</evidence>
<evidence type="ECO:0000305" key="15"/>
<evidence type="ECO:0000305" key="16">
    <source>
    </source>
</evidence>
<evidence type="ECO:0007829" key="17">
    <source>
        <dbReference type="PDB" id="7XC0"/>
    </source>
</evidence>
<organism>
    <name type="scientific">Homo sapiens</name>
    <name type="common">Human</name>
    <dbReference type="NCBI Taxonomy" id="9606"/>
    <lineage>
        <taxon>Eukaryota</taxon>
        <taxon>Metazoa</taxon>
        <taxon>Chordata</taxon>
        <taxon>Craniata</taxon>
        <taxon>Vertebrata</taxon>
        <taxon>Euteleostomi</taxon>
        <taxon>Mammalia</taxon>
        <taxon>Eutheria</taxon>
        <taxon>Euarchontoglires</taxon>
        <taxon>Primates</taxon>
        <taxon>Haplorrhini</taxon>
        <taxon>Catarrhini</taxon>
        <taxon>Hominidae</taxon>
        <taxon>Homo</taxon>
    </lineage>
</organism>
<proteinExistence type="evidence at protein level"/>